<sequence length="202" mass="22684">MCNCGSSGEKPTFNDRKSTSYEHLFKYIMVGDSAVGKSNLLLQFVDKRFAPNSDFTIGVEFGSRSININDKQIKLQIWDTAGQEKFRSITRAYYRGAVCAMIVYDITRRDSFESLNSWLTDCRKFSSCDVTTVLIGNKADLEANRQVSTSEAKEFAEKNGLMFFETSAKTALNVDEAFEKSTEQILKKLESNPGLLSNEGNN</sequence>
<accession>Q559X6</accession>
<accession>Q86JL0</accession>
<protein>
    <recommendedName>
        <fullName>Ras-related protein Rab-2B</fullName>
    </recommendedName>
</protein>
<dbReference type="EMBL" id="AAFI02000008">
    <property type="protein sequence ID" value="EAL71221.1"/>
    <property type="molecule type" value="Genomic_DNA"/>
</dbReference>
<dbReference type="RefSeq" id="XP_645208.1">
    <property type="nucleotide sequence ID" value="XM_640116.1"/>
</dbReference>
<dbReference type="SMR" id="Q559X6"/>
<dbReference type="FunCoup" id="Q559X6">
    <property type="interactions" value="10"/>
</dbReference>
<dbReference type="STRING" id="44689.Q559X6"/>
<dbReference type="PaxDb" id="44689-DDB0229402"/>
<dbReference type="EnsemblProtists" id="EAL71221">
    <property type="protein sequence ID" value="EAL71221"/>
    <property type="gene ID" value="DDB_G0272138"/>
</dbReference>
<dbReference type="GeneID" id="8618381"/>
<dbReference type="KEGG" id="ddi:DDB_G0272138"/>
<dbReference type="dictyBase" id="DDB_G0272138">
    <property type="gene designation" value="rab2B"/>
</dbReference>
<dbReference type="VEuPathDB" id="AmoebaDB:DDB_G0272138"/>
<dbReference type="eggNOG" id="KOG0098">
    <property type="taxonomic scope" value="Eukaryota"/>
</dbReference>
<dbReference type="HOGENOM" id="CLU_041217_23_1_1"/>
<dbReference type="InParanoid" id="Q559X6"/>
<dbReference type="OMA" id="HLFKYIM"/>
<dbReference type="PhylomeDB" id="Q559X6"/>
<dbReference type="Reactome" id="R-DDI-6811438">
    <property type="pathway name" value="Intra-Golgi traffic"/>
</dbReference>
<dbReference type="Reactome" id="R-DDI-8873719">
    <property type="pathway name" value="RAB geranylgeranylation"/>
</dbReference>
<dbReference type="PRO" id="PR:Q559X6"/>
<dbReference type="Proteomes" id="UP000002195">
    <property type="component" value="Chromosome 2"/>
</dbReference>
<dbReference type="GO" id="GO:0005794">
    <property type="term" value="C:Golgi apparatus"/>
    <property type="evidence" value="ECO:0000318"/>
    <property type="project" value="GO_Central"/>
</dbReference>
<dbReference type="GO" id="GO:0000139">
    <property type="term" value="C:Golgi membrane"/>
    <property type="evidence" value="ECO:0000318"/>
    <property type="project" value="GO_Central"/>
</dbReference>
<dbReference type="GO" id="GO:0005811">
    <property type="term" value="C:lipid droplet"/>
    <property type="evidence" value="ECO:0007005"/>
    <property type="project" value="dictyBase"/>
</dbReference>
<dbReference type="GO" id="GO:0140220">
    <property type="term" value="C:pathogen-containing vacuole"/>
    <property type="evidence" value="ECO:0007005"/>
    <property type="project" value="dictyBase"/>
</dbReference>
<dbReference type="GO" id="GO:0005525">
    <property type="term" value="F:GTP binding"/>
    <property type="evidence" value="ECO:0000318"/>
    <property type="project" value="GO_Central"/>
</dbReference>
<dbReference type="GO" id="GO:0003924">
    <property type="term" value="F:GTPase activity"/>
    <property type="evidence" value="ECO:0000318"/>
    <property type="project" value="GO_Central"/>
</dbReference>
<dbReference type="GO" id="GO:0006971">
    <property type="term" value="P:hypotonic response"/>
    <property type="evidence" value="ECO:0007007"/>
    <property type="project" value="dictyBase"/>
</dbReference>
<dbReference type="GO" id="GO:0016192">
    <property type="term" value="P:vesicle-mediated transport"/>
    <property type="evidence" value="ECO:0000318"/>
    <property type="project" value="GO_Central"/>
</dbReference>
<dbReference type="FunFam" id="3.40.50.300:FF:001072">
    <property type="entry name" value="Rab family GTPase"/>
    <property type="match status" value="1"/>
</dbReference>
<dbReference type="Gene3D" id="3.40.50.300">
    <property type="entry name" value="P-loop containing nucleotide triphosphate hydrolases"/>
    <property type="match status" value="1"/>
</dbReference>
<dbReference type="InterPro" id="IPR027417">
    <property type="entry name" value="P-loop_NTPase"/>
</dbReference>
<dbReference type="InterPro" id="IPR050209">
    <property type="entry name" value="Rab_GTPases_membrane_traffic"/>
</dbReference>
<dbReference type="InterPro" id="IPR005225">
    <property type="entry name" value="Small_GTP-bd"/>
</dbReference>
<dbReference type="InterPro" id="IPR001806">
    <property type="entry name" value="Small_GTPase"/>
</dbReference>
<dbReference type="NCBIfam" id="TIGR00231">
    <property type="entry name" value="small_GTP"/>
    <property type="match status" value="1"/>
</dbReference>
<dbReference type="PANTHER" id="PTHR47979">
    <property type="entry name" value="DRAB11-RELATED"/>
    <property type="match status" value="1"/>
</dbReference>
<dbReference type="Pfam" id="PF00071">
    <property type="entry name" value="Ras"/>
    <property type="match status" value="1"/>
</dbReference>
<dbReference type="PRINTS" id="PR00449">
    <property type="entry name" value="RASTRNSFRMNG"/>
</dbReference>
<dbReference type="SMART" id="SM00175">
    <property type="entry name" value="RAB"/>
    <property type="match status" value="1"/>
</dbReference>
<dbReference type="SMART" id="SM00176">
    <property type="entry name" value="RAN"/>
    <property type="match status" value="1"/>
</dbReference>
<dbReference type="SMART" id="SM00173">
    <property type="entry name" value="RAS"/>
    <property type="match status" value="1"/>
</dbReference>
<dbReference type="SMART" id="SM00174">
    <property type="entry name" value="RHO"/>
    <property type="match status" value="1"/>
</dbReference>
<dbReference type="SUPFAM" id="SSF52540">
    <property type="entry name" value="P-loop containing nucleoside triphosphate hydrolases"/>
    <property type="match status" value="1"/>
</dbReference>
<dbReference type="PROSITE" id="PS51419">
    <property type="entry name" value="RAB"/>
    <property type="match status" value="1"/>
</dbReference>
<comment type="PTM">
    <text>This sequence lacks the C-terminal cysteine motifs subject to isoprenylation in other Rab proteins.</text>
</comment>
<comment type="similarity">
    <text evidence="2">Belongs to the small GTPase superfamily. Rab family.</text>
</comment>
<keyword id="KW-0342">GTP-binding</keyword>
<keyword id="KW-0547">Nucleotide-binding</keyword>
<keyword id="KW-1185">Reference proteome</keyword>
<name>RAB2B_DICDI</name>
<gene>
    <name type="primary">rab2B</name>
    <name type="ORF">DDB_G0272138</name>
</gene>
<reference key="1">
    <citation type="journal article" date="2002" name="Nature">
        <title>Sequence and analysis of chromosome 2 of Dictyostelium discoideum.</title>
        <authorList>
            <person name="Gloeckner G."/>
            <person name="Eichinger L."/>
            <person name="Szafranski K."/>
            <person name="Pachebat J.A."/>
            <person name="Bankier A.T."/>
            <person name="Dear P.H."/>
            <person name="Lehmann R."/>
            <person name="Baumgart C."/>
            <person name="Parra G."/>
            <person name="Abril J.F."/>
            <person name="Guigo R."/>
            <person name="Kumpf K."/>
            <person name="Tunggal B."/>
            <person name="Cox E.C."/>
            <person name="Quail M.A."/>
            <person name="Platzer M."/>
            <person name="Rosenthal A."/>
            <person name="Noegel A.A."/>
        </authorList>
    </citation>
    <scope>NUCLEOTIDE SEQUENCE [LARGE SCALE GENOMIC DNA]</scope>
    <source>
        <strain>AX4</strain>
    </source>
</reference>
<reference key="2">
    <citation type="journal article" date="2005" name="Nature">
        <title>The genome of the social amoeba Dictyostelium discoideum.</title>
        <authorList>
            <person name="Eichinger L."/>
            <person name="Pachebat J.A."/>
            <person name="Gloeckner G."/>
            <person name="Rajandream M.A."/>
            <person name="Sucgang R."/>
            <person name="Berriman M."/>
            <person name="Song J."/>
            <person name="Olsen R."/>
            <person name="Szafranski K."/>
            <person name="Xu Q."/>
            <person name="Tunggal B."/>
            <person name="Kummerfeld S."/>
            <person name="Madera M."/>
            <person name="Konfortov B.A."/>
            <person name="Rivero F."/>
            <person name="Bankier A.T."/>
            <person name="Lehmann R."/>
            <person name="Hamlin N."/>
            <person name="Davies R."/>
            <person name="Gaudet P."/>
            <person name="Fey P."/>
            <person name="Pilcher K."/>
            <person name="Chen G."/>
            <person name="Saunders D."/>
            <person name="Sodergren E.J."/>
            <person name="Davis P."/>
            <person name="Kerhornou A."/>
            <person name="Nie X."/>
            <person name="Hall N."/>
            <person name="Anjard C."/>
            <person name="Hemphill L."/>
            <person name="Bason N."/>
            <person name="Farbrother P."/>
            <person name="Desany B."/>
            <person name="Just E."/>
            <person name="Morio T."/>
            <person name="Rost R."/>
            <person name="Churcher C.M."/>
            <person name="Cooper J."/>
            <person name="Haydock S."/>
            <person name="van Driessche N."/>
            <person name="Cronin A."/>
            <person name="Goodhead I."/>
            <person name="Muzny D.M."/>
            <person name="Mourier T."/>
            <person name="Pain A."/>
            <person name="Lu M."/>
            <person name="Harper D."/>
            <person name="Lindsay R."/>
            <person name="Hauser H."/>
            <person name="James K.D."/>
            <person name="Quiles M."/>
            <person name="Madan Babu M."/>
            <person name="Saito T."/>
            <person name="Buchrieser C."/>
            <person name="Wardroper A."/>
            <person name="Felder M."/>
            <person name="Thangavelu M."/>
            <person name="Johnson D."/>
            <person name="Knights A."/>
            <person name="Loulseged H."/>
            <person name="Mungall K.L."/>
            <person name="Oliver K."/>
            <person name="Price C."/>
            <person name="Quail M.A."/>
            <person name="Urushihara H."/>
            <person name="Hernandez J."/>
            <person name="Rabbinowitsch E."/>
            <person name="Steffen D."/>
            <person name="Sanders M."/>
            <person name="Ma J."/>
            <person name="Kohara Y."/>
            <person name="Sharp S."/>
            <person name="Simmonds M.N."/>
            <person name="Spiegler S."/>
            <person name="Tivey A."/>
            <person name="Sugano S."/>
            <person name="White B."/>
            <person name="Walker D."/>
            <person name="Woodward J.R."/>
            <person name="Winckler T."/>
            <person name="Tanaka Y."/>
            <person name="Shaulsky G."/>
            <person name="Schleicher M."/>
            <person name="Weinstock G.M."/>
            <person name="Rosenthal A."/>
            <person name="Cox E.C."/>
            <person name="Chisholm R.L."/>
            <person name="Gibbs R.A."/>
            <person name="Loomis W.F."/>
            <person name="Platzer M."/>
            <person name="Kay R.R."/>
            <person name="Williams J.G."/>
            <person name="Dear P.H."/>
            <person name="Noegel A.A."/>
            <person name="Barrell B.G."/>
            <person name="Kuspa A."/>
        </authorList>
    </citation>
    <scope>NUCLEOTIDE SEQUENCE [LARGE SCALE GENOMIC DNA]</scope>
    <source>
        <strain>AX4</strain>
    </source>
</reference>
<organism>
    <name type="scientific">Dictyostelium discoideum</name>
    <name type="common">Social amoeba</name>
    <dbReference type="NCBI Taxonomy" id="44689"/>
    <lineage>
        <taxon>Eukaryota</taxon>
        <taxon>Amoebozoa</taxon>
        <taxon>Evosea</taxon>
        <taxon>Eumycetozoa</taxon>
        <taxon>Dictyostelia</taxon>
        <taxon>Dictyosteliales</taxon>
        <taxon>Dictyosteliaceae</taxon>
        <taxon>Dictyostelium</taxon>
    </lineage>
</organism>
<evidence type="ECO:0000250" key="1"/>
<evidence type="ECO:0000305" key="2"/>
<proteinExistence type="inferred from homology"/>
<feature type="chain" id="PRO_0000312561" description="Ras-related protein Rab-2B">
    <location>
        <begin position="1"/>
        <end position="202"/>
    </location>
</feature>
<feature type="short sequence motif" description="Effector region" evidence="1">
    <location>
        <begin position="53"/>
        <end position="61"/>
    </location>
</feature>
<feature type="binding site" evidence="1">
    <location>
        <begin position="31"/>
        <end position="38"/>
    </location>
    <ligand>
        <name>GTP</name>
        <dbReference type="ChEBI" id="CHEBI:37565"/>
    </ligand>
</feature>
<feature type="binding site" evidence="1">
    <location>
        <begin position="79"/>
        <end position="83"/>
    </location>
    <ligand>
        <name>GTP</name>
        <dbReference type="ChEBI" id="CHEBI:37565"/>
    </ligand>
</feature>
<feature type="binding site" evidence="1">
    <location>
        <begin position="137"/>
        <end position="140"/>
    </location>
    <ligand>
        <name>GTP</name>
        <dbReference type="ChEBI" id="CHEBI:37565"/>
    </ligand>
</feature>